<proteinExistence type="inferred from homology"/>
<comment type="function">
    <text evidence="1">RNaseP catalyzes the removal of the 5'-leader sequence from pre-tRNA to produce the mature 5'-terminus. It can also cleave other RNA substrates such as 4.5S RNA. The protein component plays an auxiliary but essential role in vivo by binding to the 5'-leader sequence and broadening the substrate specificity of the ribozyme.</text>
</comment>
<comment type="catalytic activity">
    <reaction evidence="1">
        <text>Endonucleolytic cleavage of RNA, removing 5'-extranucleotides from tRNA precursor.</text>
        <dbReference type="EC" id="3.1.26.5"/>
    </reaction>
</comment>
<comment type="subunit">
    <text evidence="1">Consists of a catalytic RNA component (M1 or rnpB) and a protein subunit.</text>
</comment>
<comment type="similarity">
    <text evidence="1">Belongs to the RnpA family.</text>
</comment>
<sequence length="109" mass="12736">MKKTYRVKSDKDFQMIFSRGKNVANRKFVIYYLEKEQKHFRVGISVSKKLGNAVVRNAIKRKIRHVLLSQKTALQDYDFVVIARKGVEELDYQALEKNLIHVLKIAGLI</sequence>
<evidence type="ECO:0000255" key="1">
    <source>
        <dbReference type="HAMAP-Rule" id="MF_00227"/>
    </source>
</evidence>
<accession>Q3K2X6</accession>
<dbReference type="EC" id="3.1.26.5" evidence="1"/>
<dbReference type="EMBL" id="CP000114">
    <property type="protein sequence ID" value="ABA45680.1"/>
    <property type="molecule type" value="Genomic_DNA"/>
</dbReference>
<dbReference type="RefSeq" id="WP_000754611.1">
    <property type="nucleotide sequence ID" value="NC_007432.1"/>
</dbReference>
<dbReference type="SMR" id="Q3K2X6"/>
<dbReference type="KEGG" id="sak:SAK_0481"/>
<dbReference type="HOGENOM" id="CLU_117179_9_1_9"/>
<dbReference type="GO" id="GO:0030677">
    <property type="term" value="C:ribonuclease P complex"/>
    <property type="evidence" value="ECO:0007669"/>
    <property type="project" value="TreeGrafter"/>
</dbReference>
<dbReference type="GO" id="GO:0042781">
    <property type="term" value="F:3'-tRNA processing endoribonuclease activity"/>
    <property type="evidence" value="ECO:0007669"/>
    <property type="project" value="TreeGrafter"/>
</dbReference>
<dbReference type="GO" id="GO:0004526">
    <property type="term" value="F:ribonuclease P activity"/>
    <property type="evidence" value="ECO:0007669"/>
    <property type="project" value="UniProtKB-UniRule"/>
</dbReference>
<dbReference type="GO" id="GO:0000049">
    <property type="term" value="F:tRNA binding"/>
    <property type="evidence" value="ECO:0007669"/>
    <property type="project" value="UniProtKB-UniRule"/>
</dbReference>
<dbReference type="GO" id="GO:0001682">
    <property type="term" value="P:tRNA 5'-leader removal"/>
    <property type="evidence" value="ECO:0007669"/>
    <property type="project" value="UniProtKB-UniRule"/>
</dbReference>
<dbReference type="FunFam" id="3.30.230.10:FF:000021">
    <property type="entry name" value="Ribonuclease P protein component"/>
    <property type="match status" value="1"/>
</dbReference>
<dbReference type="Gene3D" id="3.30.230.10">
    <property type="match status" value="1"/>
</dbReference>
<dbReference type="HAMAP" id="MF_00227">
    <property type="entry name" value="RNase_P"/>
    <property type="match status" value="1"/>
</dbReference>
<dbReference type="InterPro" id="IPR020568">
    <property type="entry name" value="Ribosomal_Su5_D2-typ_SF"/>
</dbReference>
<dbReference type="InterPro" id="IPR014721">
    <property type="entry name" value="Ribsml_uS5_D2-typ_fold_subgr"/>
</dbReference>
<dbReference type="InterPro" id="IPR000100">
    <property type="entry name" value="RNase_P"/>
</dbReference>
<dbReference type="InterPro" id="IPR020539">
    <property type="entry name" value="RNase_P_CS"/>
</dbReference>
<dbReference type="NCBIfam" id="TIGR00188">
    <property type="entry name" value="rnpA"/>
    <property type="match status" value="1"/>
</dbReference>
<dbReference type="PANTHER" id="PTHR33992">
    <property type="entry name" value="RIBONUCLEASE P PROTEIN COMPONENT"/>
    <property type="match status" value="1"/>
</dbReference>
<dbReference type="PANTHER" id="PTHR33992:SF1">
    <property type="entry name" value="RIBONUCLEASE P PROTEIN COMPONENT"/>
    <property type="match status" value="1"/>
</dbReference>
<dbReference type="Pfam" id="PF00825">
    <property type="entry name" value="Ribonuclease_P"/>
    <property type="match status" value="1"/>
</dbReference>
<dbReference type="SUPFAM" id="SSF54211">
    <property type="entry name" value="Ribosomal protein S5 domain 2-like"/>
    <property type="match status" value="1"/>
</dbReference>
<dbReference type="PROSITE" id="PS00648">
    <property type="entry name" value="RIBONUCLEASE_P"/>
    <property type="match status" value="1"/>
</dbReference>
<reference key="1">
    <citation type="journal article" date="2005" name="Proc. Natl. Acad. Sci. U.S.A.">
        <title>Genome analysis of multiple pathogenic isolates of Streptococcus agalactiae: implications for the microbial 'pan-genome'.</title>
        <authorList>
            <person name="Tettelin H."/>
            <person name="Masignani V."/>
            <person name="Cieslewicz M.J."/>
            <person name="Donati C."/>
            <person name="Medini D."/>
            <person name="Ward N.L."/>
            <person name="Angiuoli S.V."/>
            <person name="Crabtree J."/>
            <person name="Jones A.L."/>
            <person name="Durkin A.S."/>
            <person name="DeBoy R.T."/>
            <person name="Davidsen T.M."/>
            <person name="Mora M."/>
            <person name="Scarselli M."/>
            <person name="Margarit y Ros I."/>
            <person name="Peterson J.D."/>
            <person name="Hauser C.R."/>
            <person name="Sundaram J.P."/>
            <person name="Nelson W.C."/>
            <person name="Madupu R."/>
            <person name="Brinkac L.M."/>
            <person name="Dodson R.J."/>
            <person name="Rosovitz M.J."/>
            <person name="Sullivan S.A."/>
            <person name="Daugherty S.C."/>
            <person name="Haft D.H."/>
            <person name="Selengut J."/>
            <person name="Gwinn M.L."/>
            <person name="Zhou L."/>
            <person name="Zafar N."/>
            <person name="Khouri H."/>
            <person name="Radune D."/>
            <person name="Dimitrov G."/>
            <person name="Watkins K."/>
            <person name="O'Connor K.J."/>
            <person name="Smith S."/>
            <person name="Utterback T.R."/>
            <person name="White O."/>
            <person name="Rubens C.E."/>
            <person name="Grandi G."/>
            <person name="Madoff L.C."/>
            <person name="Kasper D.L."/>
            <person name="Telford J.L."/>
            <person name="Wessels M.R."/>
            <person name="Rappuoli R."/>
            <person name="Fraser C.M."/>
        </authorList>
    </citation>
    <scope>NUCLEOTIDE SEQUENCE [LARGE SCALE GENOMIC DNA]</scope>
    <source>
        <strain>ATCC 27591 / A909 / CDC SS700</strain>
    </source>
</reference>
<keyword id="KW-0255">Endonuclease</keyword>
<keyword id="KW-0378">Hydrolase</keyword>
<keyword id="KW-0540">Nuclease</keyword>
<keyword id="KW-0694">RNA-binding</keyword>
<keyword id="KW-0819">tRNA processing</keyword>
<organism>
    <name type="scientific">Streptococcus agalactiae serotype Ia (strain ATCC 27591 / A909 / CDC SS700)</name>
    <dbReference type="NCBI Taxonomy" id="205921"/>
    <lineage>
        <taxon>Bacteria</taxon>
        <taxon>Bacillati</taxon>
        <taxon>Bacillota</taxon>
        <taxon>Bacilli</taxon>
        <taxon>Lactobacillales</taxon>
        <taxon>Streptococcaceae</taxon>
        <taxon>Streptococcus</taxon>
    </lineage>
</organism>
<feature type="chain" id="PRO_1000021474" description="Ribonuclease P protein component">
    <location>
        <begin position="1"/>
        <end position="109"/>
    </location>
</feature>
<protein>
    <recommendedName>
        <fullName evidence="1">Ribonuclease P protein component</fullName>
        <shortName evidence="1">RNase P protein</shortName>
        <shortName evidence="1">RNaseP protein</shortName>
        <ecNumber evidence="1">3.1.26.5</ecNumber>
    </recommendedName>
    <alternativeName>
        <fullName evidence="1">Protein C5</fullName>
    </alternativeName>
</protein>
<name>RNPA_STRA1</name>
<gene>
    <name evidence="1" type="primary">rnpA</name>
    <name type="ordered locus">SAK_0481</name>
</gene>